<keyword id="KW-0028">Amino-acid biosynthesis</keyword>
<keyword id="KW-0963">Cytoplasm</keyword>
<keyword id="KW-0368">Histidine biosynthesis</keyword>
<name>HISZ_LISMF</name>
<reference key="1">
    <citation type="journal article" date="2004" name="Nucleic Acids Res.">
        <title>Whole genome comparisons of serotype 4b and 1/2a strains of the food-borne pathogen Listeria monocytogenes reveal new insights into the core genome components of this species.</title>
        <authorList>
            <person name="Nelson K.E."/>
            <person name="Fouts D.E."/>
            <person name="Mongodin E.F."/>
            <person name="Ravel J."/>
            <person name="DeBoy R.T."/>
            <person name="Kolonay J.F."/>
            <person name="Rasko D.A."/>
            <person name="Angiuoli S.V."/>
            <person name="Gill S.R."/>
            <person name="Paulsen I.T."/>
            <person name="Peterson J.D."/>
            <person name="White O."/>
            <person name="Nelson W.C."/>
            <person name="Nierman W.C."/>
            <person name="Beanan M.J."/>
            <person name="Brinkac L.M."/>
            <person name="Daugherty S.C."/>
            <person name="Dodson R.J."/>
            <person name="Durkin A.S."/>
            <person name="Madupu R."/>
            <person name="Haft D.H."/>
            <person name="Selengut J."/>
            <person name="Van Aken S.E."/>
            <person name="Khouri H.M."/>
            <person name="Fedorova N."/>
            <person name="Forberger H.A."/>
            <person name="Tran B."/>
            <person name="Kathariou S."/>
            <person name="Wonderling L.D."/>
            <person name="Uhlich G.A."/>
            <person name="Bayles D.O."/>
            <person name="Luchansky J.B."/>
            <person name="Fraser C.M."/>
        </authorList>
    </citation>
    <scope>NUCLEOTIDE SEQUENCE [LARGE SCALE GENOMIC DNA]</scope>
    <source>
        <strain>F2365</strain>
    </source>
</reference>
<organism>
    <name type="scientific">Listeria monocytogenes serotype 4b (strain F2365)</name>
    <dbReference type="NCBI Taxonomy" id="265669"/>
    <lineage>
        <taxon>Bacteria</taxon>
        <taxon>Bacillati</taxon>
        <taxon>Bacillota</taxon>
        <taxon>Bacilli</taxon>
        <taxon>Bacillales</taxon>
        <taxon>Listeriaceae</taxon>
        <taxon>Listeria</taxon>
    </lineage>
</organism>
<sequence>MNLNKNLPTGTRDKLFREAQAAYKIEQQVNHYFEKRGFKRIETPVIEFEDVFSSEHQADAKLYRFFDEKGRLTVLRPDMTLPIGRVVSTTGVMLPLKLSYSGKIFRANEDFGGEQNEQTQAGIEIIGYPSIKAEIECILSGIGVLNALEIPNFQIELGHAAIYRRVIQLLNLSETAEIDFRQLIQNKSLTGIKRFVANNPSTLDDFILAIPRLFGPATAILNQAKSLTTDKGILTALREMETIVEAVSYTADISVDLGLVQDFHYYTGIIFRGYADLAADNFLSGGRYDHLLEQFTSSSSPAVGLALNLDSLTTLQNRAGIIKKQTPTTLLIHYDLEALPQAEKFMQETPNSELSFFETASNAISFAKKWHIPEVVHVSSQGIQTILQREVD</sequence>
<evidence type="ECO:0000255" key="1">
    <source>
        <dbReference type="HAMAP-Rule" id="MF_00125"/>
    </source>
</evidence>
<accession>Q722Y1</accession>
<gene>
    <name evidence="1" type="primary">hisZ</name>
    <name type="ordered locus">LMOf2365_0598</name>
</gene>
<dbReference type="EMBL" id="AE017262">
    <property type="protein sequence ID" value="AAT03380.1"/>
    <property type="molecule type" value="Genomic_DNA"/>
</dbReference>
<dbReference type="RefSeq" id="WP_010958765.1">
    <property type="nucleotide sequence ID" value="NC_002973.6"/>
</dbReference>
<dbReference type="SMR" id="Q722Y1"/>
<dbReference type="KEGG" id="lmf:LMOf2365_0598"/>
<dbReference type="HOGENOM" id="CLU_025113_0_0_9"/>
<dbReference type="UniPathway" id="UPA00031">
    <property type="reaction ID" value="UER00006"/>
</dbReference>
<dbReference type="GO" id="GO:0005737">
    <property type="term" value="C:cytoplasm"/>
    <property type="evidence" value="ECO:0007669"/>
    <property type="project" value="UniProtKB-SubCell"/>
</dbReference>
<dbReference type="GO" id="GO:0140096">
    <property type="term" value="F:catalytic activity, acting on a protein"/>
    <property type="evidence" value="ECO:0007669"/>
    <property type="project" value="UniProtKB-ARBA"/>
</dbReference>
<dbReference type="GO" id="GO:0004821">
    <property type="term" value="F:histidine-tRNA ligase activity"/>
    <property type="evidence" value="ECO:0007669"/>
    <property type="project" value="TreeGrafter"/>
</dbReference>
<dbReference type="GO" id="GO:0016740">
    <property type="term" value="F:transferase activity"/>
    <property type="evidence" value="ECO:0007669"/>
    <property type="project" value="UniProtKB-ARBA"/>
</dbReference>
<dbReference type="GO" id="GO:0006427">
    <property type="term" value="P:histidyl-tRNA aminoacylation"/>
    <property type="evidence" value="ECO:0007669"/>
    <property type="project" value="TreeGrafter"/>
</dbReference>
<dbReference type="GO" id="GO:0000105">
    <property type="term" value="P:L-histidine biosynthetic process"/>
    <property type="evidence" value="ECO:0007669"/>
    <property type="project" value="UniProtKB-UniRule"/>
</dbReference>
<dbReference type="CDD" id="cd00773">
    <property type="entry name" value="HisRS-like_core"/>
    <property type="match status" value="1"/>
</dbReference>
<dbReference type="FunFam" id="3.30.930.10:FF:000111">
    <property type="entry name" value="ATP phosphoribosyltransferase regulatory subunit"/>
    <property type="match status" value="1"/>
</dbReference>
<dbReference type="Gene3D" id="3.30.930.10">
    <property type="entry name" value="Bira Bifunctional Protein, Domain 2"/>
    <property type="match status" value="1"/>
</dbReference>
<dbReference type="HAMAP" id="MF_00125">
    <property type="entry name" value="HisZ"/>
    <property type="match status" value="1"/>
</dbReference>
<dbReference type="InterPro" id="IPR045864">
    <property type="entry name" value="aa-tRNA-synth_II/BPL/LPL"/>
</dbReference>
<dbReference type="InterPro" id="IPR041715">
    <property type="entry name" value="HisRS-like_core"/>
</dbReference>
<dbReference type="InterPro" id="IPR004516">
    <property type="entry name" value="HisRS/HisZ"/>
</dbReference>
<dbReference type="InterPro" id="IPR004517">
    <property type="entry name" value="HisZ"/>
</dbReference>
<dbReference type="NCBIfam" id="TIGR00443">
    <property type="entry name" value="hisZ_biosyn_reg"/>
    <property type="match status" value="1"/>
</dbReference>
<dbReference type="NCBIfam" id="NF008936">
    <property type="entry name" value="PRK12292.1-3"/>
    <property type="match status" value="1"/>
</dbReference>
<dbReference type="PANTHER" id="PTHR43707:SF6">
    <property type="entry name" value="ATP PHOSPHORIBOSYLTRANSFERASE REGULATORY SUBUNIT"/>
    <property type="match status" value="1"/>
</dbReference>
<dbReference type="PANTHER" id="PTHR43707">
    <property type="entry name" value="HISTIDYL-TRNA SYNTHETASE"/>
    <property type="match status" value="1"/>
</dbReference>
<dbReference type="Pfam" id="PF13393">
    <property type="entry name" value="tRNA-synt_His"/>
    <property type="match status" value="1"/>
</dbReference>
<dbReference type="PIRSF" id="PIRSF001549">
    <property type="entry name" value="His-tRNA_synth"/>
    <property type="match status" value="1"/>
</dbReference>
<dbReference type="SUPFAM" id="SSF55681">
    <property type="entry name" value="Class II aaRS and biotin synthetases"/>
    <property type="match status" value="1"/>
</dbReference>
<protein>
    <recommendedName>
        <fullName evidence="1">ATP phosphoribosyltransferase regulatory subunit</fullName>
    </recommendedName>
</protein>
<proteinExistence type="inferred from homology"/>
<comment type="function">
    <text evidence="1">Required for the first step of histidine biosynthesis. May allow the feedback regulation of ATP phosphoribosyltransferase activity by histidine.</text>
</comment>
<comment type="pathway">
    <text evidence="1">Amino-acid biosynthesis; L-histidine biosynthesis; L-histidine from 5-phospho-alpha-D-ribose 1-diphosphate: step 1/9.</text>
</comment>
<comment type="subunit">
    <text evidence="1">Heteromultimer composed of HisG and HisZ subunits.</text>
</comment>
<comment type="subcellular location">
    <subcellularLocation>
        <location evidence="1">Cytoplasm</location>
    </subcellularLocation>
</comment>
<comment type="miscellaneous">
    <text>This function is generally fulfilled by the C-terminal part of HisG, which is missing in some bacteria such as this one.</text>
</comment>
<comment type="similarity">
    <text evidence="1">Belongs to the class-II aminoacyl-tRNA synthetase family. HisZ subfamily.</text>
</comment>
<feature type="chain" id="PRO_0000171043" description="ATP phosphoribosyltransferase regulatory subunit">
    <location>
        <begin position="1"/>
        <end position="392"/>
    </location>
</feature>